<gene>
    <name evidence="1" type="primary">PB1</name>
</gene>
<comment type="function">
    <text evidence="1">RNA-dependent RNA polymerase which is responsible for replication and transcription of virus RNA segments. The transcription of viral mRNAs occurs by a unique mechanism called cap-snatching. 5' methylated caps of cellular mRNAs are cleaved after 10-13 nucleotides by PA. In turn, these short capped RNAs are used as primers by PB1 for transcription of viral mRNAs. During virus replication, PB1 initiates RNA synthesis and copy vRNA into complementary RNA (cRNA) which in turn serves as a template for the production of more vRNAs.</text>
</comment>
<comment type="catalytic activity">
    <reaction evidence="1">
        <text>RNA(n) + a ribonucleoside 5'-triphosphate = RNA(n+1) + diphosphate</text>
        <dbReference type="Rhea" id="RHEA:21248"/>
        <dbReference type="Rhea" id="RHEA-COMP:14527"/>
        <dbReference type="Rhea" id="RHEA-COMP:17342"/>
        <dbReference type="ChEBI" id="CHEBI:33019"/>
        <dbReference type="ChEBI" id="CHEBI:61557"/>
        <dbReference type="ChEBI" id="CHEBI:140395"/>
        <dbReference type="EC" id="2.7.7.48"/>
    </reaction>
</comment>
<comment type="subunit">
    <text evidence="1">Influenza RNA polymerase is composed of three subunits: PB1, PB2 and PA. Interacts (via N-terminus) with PA (via C-terminus). Interacts (via C-terminus) with PB2 (via N-terminus); this interaction is essential for transcription initiation.</text>
</comment>
<comment type="subcellular location">
    <subcellularLocation>
        <location evidence="1">Host nucleus</location>
    </subcellularLocation>
    <subcellularLocation>
        <location evidence="1">Host cytoplasm</location>
    </subcellularLocation>
</comment>
<comment type="PTM">
    <text evidence="1">Phosphorylated by host PRKCA.</text>
</comment>
<comment type="miscellaneous">
    <text>SC35 was derived from A/Seal/Massachussetts/1/80 (H7N7) by serial passages in chicken embryo cells, thereby acquiring a multibasic cleavage site in its hemagglutinin (HA) and becoming 100% lethal for chickens. SC35 was then passaged 11 times in mouse lung, yielding the mouse-adapted variant SC35M.</text>
</comment>
<comment type="similarity">
    <text evidence="1">Belongs to the influenza viruses polymerase PB1 family.</text>
</comment>
<proteinExistence type="inferred from homology"/>
<organism>
    <name type="scientific">Influenza A virus (strain A/Seal/Massachusetts/1/1980 H7N7)</name>
    <dbReference type="NCBI Taxonomy" id="384493"/>
    <lineage>
        <taxon>Viruses</taxon>
        <taxon>Riboviria</taxon>
        <taxon>Orthornavirae</taxon>
        <taxon>Negarnaviricota</taxon>
        <taxon>Polyploviricotina</taxon>
        <taxon>Insthoviricetes</taxon>
        <taxon>Articulavirales</taxon>
        <taxon>Orthomyxoviridae</taxon>
        <taxon>Alphainfluenzavirus</taxon>
        <taxon>Alphainfluenzavirus influenzae</taxon>
        <taxon>Influenza A virus</taxon>
    </lineage>
</organism>
<feature type="chain" id="PRO_0000279611" description="RNA-directed RNA polymerase catalytic subunit">
    <location>
        <begin position="1"/>
        <end position="757"/>
    </location>
</feature>
<feature type="domain" description="RdRp catalytic" evidence="1">
    <location>
        <begin position="286"/>
        <end position="483"/>
    </location>
</feature>
<feature type="region of interest" description="Disordered" evidence="2">
    <location>
        <begin position="50"/>
        <end position="71"/>
    </location>
</feature>
<feature type="region of interest" description="Promoter-binding site" evidence="1">
    <location>
        <begin position="249"/>
        <end position="256"/>
    </location>
</feature>
<feature type="short sequence motif" description="Nuclear localization signal" evidence="1">
    <location>
        <begin position="187"/>
        <end position="195"/>
    </location>
</feature>
<feature type="short sequence motif" description="Nuclear localization signal" evidence="1">
    <location>
        <begin position="203"/>
        <end position="216"/>
    </location>
</feature>
<name>RDRP_I80A2</name>
<keyword id="KW-1262">Eukaryotic host gene expression shutoff by virus</keyword>
<keyword id="KW-1191">Eukaryotic host transcription shutoff by virus</keyword>
<keyword id="KW-1035">Host cytoplasm</keyword>
<keyword id="KW-1190">Host gene expression shutoff by virus</keyword>
<keyword id="KW-1048">Host nucleus</keyword>
<keyword id="KW-0945">Host-virus interaction</keyword>
<keyword id="KW-1104">Inhibition of host RNA polymerase II by virus</keyword>
<keyword id="KW-0547">Nucleotide-binding</keyword>
<keyword id="KW-0548">Nucleotidyltransferase</keyword>
<keyword id="KW-0597">Phosphoprotein</keyword>
<keyword id="KW-0696">RNA-directed RNA polymerase</keyword>
<keyword id="KW-0808">Transferase</keyword>
<keyword id="KW-0693">Viral RNA replication</keyword>
<keyword id="KW-1195">Viral transcription</keyword>
<protein>
    <recommendedName>
        <fullName evidence="1">RNA-directed RNA polymerase catalytic subunit</fullName>
        <ecNumber evidence="1">2.7.7.48</ecNumber>
    </recommendedName>
    <alternativeName>
        <fullName evidence="1">Polymerase basic protein 1</fullName>
        <shortName evidence="1">PB1</shortName>
    </alternativeName>
    <alternativeName>
        <fullName evidence="1">RNA-directed RNA polymerase subunit P1</fullName>
    </alternativeName>
</protein>
<dbReference type="EC" id="2.7.7.48" evidence="1"/>
<dbReference type="EMBL" id="DQ266098">
    <property type="protein sequence ID" value="ABB90271.1"/>
    <property type="molecule type" value="Genomic_RNA"/>
</dbReference>
<dbReference type="SMR" id="Q2VC92"/>
<dbReference type="Proteomes" id="UP000008576">
    <property type="component" value="Genome"/>
</dbReference>
<dbReference type="GO" id="GO:0030430">
    <property type="term" value="C:host cell cytoplasm"/>
    <property type="evidence" value="ECO:0007669"/>
    <property type="project" value="UniProtKB-SubCell"/>
</dbReference>
<dbReference type="GO" id="GO:0042025">
    <property type="term" value="C:host cell nucleus"/>
    <property type="evidence" value="ECO:0007669"/>
    <property type="project" value="UniProtKB-SubCell"/>
</dbReference>
<dbReference type="GO" id="GO:0000166">
    <property type="term" value="F:nucleotide binding"/>
    <property type="evidence" value="ECO:0007669"/>
    <property type="project" value="UniProtKB-UniRule"/>
</dbReference>
<dbReference type="GO" id="GO:0003723">
    <property type="term" value="F:RNA binding"/>
    <property type="evidence" value="ECO:0007669"/>
    <property type="project" value="InterPro"/>
</dbReference>
<dbReference type="GO" id="GO:0003968">
    <property type="term" value="F:RNA-directed RNA polymerase activity"/>
    <property type="evidence" value="ECO:0007669"/>
    <property type="project" value="UniProtKB-UniRule"/>
</dbReference>
<dbReference type="GO" id="GO:0006351">
    <property type="term" value="P:DNA-templated transcription"/>
    <property type="evidence" value="ECO:0007669"/>
    <property type="project" value="UniProtKB-UniRule"/>
</dbReference>
<dbReference type="GO" id="GO:0039657">
    <property type="term" value="P:symbiont-mediated suppression of host gene expression"/>
    <property type="evidence" value="ECO:0007669"/>
    <property type="project" value="UniProtKB-KW"/>
</dbReference>
<dbReference type="GO" id="GO:0039523">
    <property type="term" value="P:symbiont-mediated suppression of host mRNA transcription via inhibition of RNA polymerase II activity"/>
    <property type="evidence" value="ECO:0007669"/>
    <property type="project" value="UniProtKB-UniRule"/>
</dbReference>
<dbReference type="GO" id="GO:0039694">
    <property type="term" value="P:viral RNA genome replication"/>
    <property type="evidence" value="ECO:0007669"/>
    <property type="project" value="UniProtKB-UniRule"/>
</dbReference>
<dbReference type="GO" id="GO:0019083">
    <property type="term" value="P:viral transcription"/>
    <property type="evidence" value="ECO:0007669"/>
    <property type="project" value="UniProtKB-KW"/>
</dbReference>
<dbReference type="Gene3D" id="6.10.140.720">
    <property type="match status" value="1"/>
</dbReference>
<dbReference type="HAMAP" id="MF_04065">
    <property type="entry name" value="INFV_RDRP"/>
    <property type="match status" value="1"/>
</dbReference>
<dbReference type="InterPro" id="IPR007099">
    <property type="entry name" value="RNA-dir_pol_NSvirus"/>
</dbReference>
<dbReference type="InterPro" id="IPR001407">
    <property type="entry name" value="RNA_pol_PB1_influenza"/>
</dbReference>
<dbReference type="Pfam" id="PF00602">
    <property type="entry name" value="Flu_PB1"/>
    <property type="match status" value="1"/>
</dbReference>
<dbReference type="PIRSF" id="PIRSF000827">
    <property type="entry name" value="RdRPol_OMV"/>
    <property type="match status" value="1"/>
</dbReference>
<dbReference type="PROSITE" id="PS50525">
    <property type="entry name" value="RDRP_SSRNA_NEG_SEG"/>
    <property type="match status" value="1"/>
</dbReference>
<evidence type="ECO:0000255" key="1">
    <source>
        <dbReference type="HAMAP-Rule" id="MF_04065"/>
    </source>
</evidence>
<evidence type="ECO:0000256" key="2">
    <source>
        <dbReference type="SAM" id="MobiDB-lite"/>
    </source>
</evidence>
<sequence>MDVNPTLLFLKIPAQNAISTTFPYTGDPPYSHGTGTGYTMDTVNRTHQYSEKGKWKTNTETGAPQLNPIDGPLPEDNEPSGYAQTDCVLEAVAFLEESHPGIFENSCLETMEVIQQTRVDKLTQGRQTYDWTLNRNQPAATALANTIEVFRSNGLTANESGRLIDLLRDVMDSMDKEEMEITTHFQRKRRVRDNMTKKMVTQRTIGKKKQRLNKRSYLIRALTLNTMTKDAERGKLKRRAIATPGMQIRGFVYFVETLARSICEKLEQSGLPVGGNEKKAKLANVVRKMMTNSQDTELSFTITGDNTKWNENQNPRMFLAMITYITRNQPEWFRNVLSIAPIMFSNKMARLGKGYMFESKSMKLRTQIPAEMLANIDLKYFNESTRKKIEKIRPLLIDGTASLSPGMMMGMFNMLSTVLGVSILNLGQKRYTKTTYWWDGLQSSDDFALIVNAPNHEGIQAGVDRFYRTCKLVGINMSKKKSYINRTGTFEFTSFFYRYGFVANFSMELPSFGVSGINESADMSIGVTVIKNNMINNDLGPATAQMALQLFIKDYRYTYRCHRGDTQIQTRRSFELKKLWEQTRSKAGLLVSDGGPNLYNIRNLHIPEVCLKWELMDEDYQGRLCNPLNPFVSHKEIESVNNAVVMPAHGPAKSMEYDAVATTHSWIPKRNRSILNTNQRGILEDEQMYQKCCNLFEKFFPSSSYRRPVGISSMVEAMVSRARIDARIDFESGRIKKEEFAEIMKICSTIEELRRQK</sequence>
<organismHost>
    <name type="scientific">Aves</name>
    <dbReference type="NCBI Taxonomy" id="8782"/>
</organismHost>
<organismHost>
    <name type="scientific">Equus caballus</name>
    <name type="common">Horse</name>
    <dbReference type="NCBI Taxonomy" id="9796"/>
</organismHost>
<organismHost>
    <name type="scientific">Homo sapiens</name>
    <name type="common">Human</name>
    <dbReference type="NCBI Taxonomy" id="9606"/>
</organismHost>
<organismHost>
    <name type="scientific">Phocidae</name>
    <name type="common">true seals</name>
    <dbReference type="NCBI Taxonomy" id="9709"/>
</organismHost>
<reference key="1">
    <citation type="journal article" date="2005" name="Proc. Natl. Acad. Sci. U.S.A.">
        <title>The viral polymerase mediates adaptation of an avian influenza virus to a mammalian host.</title>
        <authorList>
            <person name="Gabriel G."/>
            <person name="Dauber B."/>
            <person name="Wolff T."/>
            <person name="Planz O."/>
            <person name="Klenk H.D."/>
            <person name="Stech J."/>
        </authorList>
    </citation>
    <scope>NUCLEOTIDE SEQUENCE [GENOMIC RNA]</scope>
    <source>
        <strain>SC35M mouse-adapted</strain>
    </source>
</reference>
<accession>Q2VC92</accession>